<reference key="1">
    <citation type="journal article" date="2008" name="Proc. Natl. Acad. Sci. U.S.A.">
        <title>The genome of Cyanothece 51142, a unicellular diazotrophic cyanobacterium important in the marine nitrogen cycle.</title>
        <authorList>
            <person name="Welsh E.A."/>
            <person name="Liberton M."/>
            <person name="Stoeckel J."/>
            <person name="Loh T."/>
            <person name="Elvitigala T."/>
            <person name="Wang C."/>
            <person name="Wollam A."/>
            <person name="Fulton R.S."/>
            <person name="Clifton S.W."/>
            <person name="Jacobs J.M."/>
            <person name="Aurora R."/>
            <person name="Ghosh B.K."/>
            <person name="Sherman L.A."/>
            <person name="Smith R.D."/>
            <person name="Wilson R.K."/>
            <person name="Pakrasi H.B."/>
        </authorList>
    </citation>
    <scope>NUCLEOTIDE SEQUENCE [LARGE SCALE GENOMIC DNA]</scope>
    <source>
        <strain>ATCC 51142 / BH68</strain>
    </source>
</reference>
<organism>
    <name type="scientific">Crocosphaera subtropica (strain ATCC 51142 / BH68)</name>
    <name type="common">Cyanothece sp. (strain ATCC 51142)</name>
    <dbReference type="NCBI Taxonomy" id="43989"/>
    <lineage>
        <taxon>Bacteria</taxon>
        <taxon>Bacillati</taxon>
        <taxon>Cyanobacteriota</taxon>
        <taxon>Cyanophyceae</taxon>
        <taxon>Oscillatoriophycideae</taxon>
        <taxon>Chroococcales</taxon>
        <taxon>Aphanothecaceae</taxon>
        <taxon>Crocosphaera</taxon>
        <taxon>Crocosphaera subtropica</taxon>
    </lineage>
</organism>
<dbReference type="EC" id="2.7.7.3" evidence="1"/>
<dbReference type="EMBL" id="CP000806">
    <property type="protein sequence ID" value="ACB50229.1"/>
    <property type="molecule type" value="Genomic_DNA"/>
</dbReference>
<dbReference type="RefSeq" id="WP_009546111.1">
    <property type="nucleotide sequence ID" value="NC_010546.1"/>
</dbReference>
<dbReference type="SMR" id="B1WS35"/>
<dbReference type="STRING" id="43989.cce_0878"/>
<dbReference type="KEGG" id="cyt:cce_0878"/>
<dbReference type="eggNOG" id="COG0669">
    <property type="taxonomic scope" value="Bacteria"/>
</dbReference>
<dbReference type="HOGENOM" id="CLU_100149_0_0_3"/>
<dbReference type="OrthoDB" id="9806661at2"/>
<dbReference type="UniPathway" id="UPA00241">
    <property type="reaction ID" value="UER00355"/>
</dbReference>
<dbReference type="Proteomes" id="UP000001203">
    <property type="component" value="Chromosome circular"/>
</dbReference>
<dbReference type="GO" id="GO:0005737">
    <property type="term" value="C:cytoplasm"/>
    <property type="evidence" value="ECO:0007669"/>
    <property type="project" value="UniProtKB-SubCell"/>
</dbReference>
<dbReference type="GO" id="GO:0005524">
    <property type="term" value="F:ATP binding"/>
    <property type="evidence" value="ECO:0007669"/>
    <property type="project" value="UniProtKB-KW"/>
</dbReference>
<dbReference type="GO" id="GO:0004595">
    <property type="term" value="F:pantetheine-phosphate adenylyltransferase activity"/>
    <property type="evidence" value="ECO:0007669"/>
    <property type="project" value="UniProtKB-UniRule"/>
</dbReference>
<dbReference type="GO" id="GO:0015937">
    <property type="term" value="P:coenzyme A biosynthetic process"/>
    <property type="evidence" value="ECO:0007669"/>
    <property type="project" value="UniProtKB-UniRule"/>
</dbReference>
<dbReference type="CDD" id="cd02163">
    <property type="entry name" value="PPAT"/>
    <property type="match status" value="1"/>
</dbReference>
<dbReference type="Gene3D" id="3.40.50.620">
    <property type="entry name" value="HUPs"/>
    <property type="match status" value="1"/>
</dbReference>
<dbReference type="HAMAP" id="MF_00151">
    <property type="entry name" value="PPAT_bact"/>
    <property type="match status" value="1"/>
</dbReference>
<dbReference type="InterPro" id="IPR004821">
    <property type="entry name" value="Cyt_trans-like"/>
</dbReference>
<dbReference type="InterPro" id="IPR001980">
    <property type="entry name" value="PPAT"/>
</dbReference>
<dbReference type="InterPro" id="IPR014729">
    <property type="entry name" value="Rossmann-like_a/b/a_fold"/>
</dbReference>
<dbReference type="NCBIfam" id="TIGR01510">
    <property type="entry name" value="coaD_prev_kdtB"/>
    <property type="match status" value="1"/>
</dbReference>
<dbReference type="NCBIfam" id="TIGR00125">
    <property type="entry name" value="cyt_tran_rel"/>
    <property type="match status" value="1"/>
</dbReference>
<dbReference type="PANTHER" id="PTHR21342">
    <property type="entry name" value="PHOSPHOPANTETHEINE ADENYLYLTRANSFERASE"/>
    <property type="match status" value="1"/>
</dbReference>
<dbReference type="PANTHER" id="PTHR21342:SF1">
    <property type="entry name" value="PHOSPHOPANTETHEINE ADENYLYLTRANSFERASE"/>
    <property type="match status" value="1"/>
</dbReference>
<dbReference type="Pfam" id="PF01467">
    <property type="entry name" value="CTP_transf_like"/>
    <property type="match status" value="1"/>
</dbReference>
<dbReference type="PRINTS" id="PR01020">
    <property type="entry name" value="LPSBIOSNTHSS"/>
</dbReference>
<dbReference type="SUPFAM" id="SSF52374">
    <property type="entry name" value="Nucleotidylyl transferase"/>
    <property type="match status" value="1"/>
</dbReference>
<keyword id="KW-0067">ATP-binding</keyword>
<keyword id="KW-0173">Coenzyme A biosynthesis</keyword>
<keyword id="KW-0963">Cytoplasm</keyword>
<keyword id="KW-0460">Magnesium</keyword>
<keyword id="KW-0547">Nucleotide-binding</keyword>
<keyword id="KW-0548">Nucleotidyltransferase</keyword>
<keyword id="KW-1185">Reference proteome</keyword>
<keyword id="KW-0808">Transferase</keyword>
<sequence length="157" mass="17947">MIAIYPGSFDPITLGHLDIIERGVVLFEKVIVTVMYNPNKRPLFPVEKRIEQITKCTQHLPGVEVDSYKGLTVDYAKLRKAQVLLRGLRVLSDFEKELQMAHTNKTLAEDVQTIFLATNKEYSFLSSSTVKEIAQFGGSVSHMVPENVLRDLREYYR</sequence>
<name>COAD_CROS5</name>
<evidence type="ECO:0000255" key="1">
    <source>
        <dbReference type="HAMAP-Rule" id="MF_00151"/>
    </source>
</evidence>
<comment type="function">
    <text evidence="1">Reversibly transfers an adenylyl group from ATP to 4'-phosphopantetheine, yielding dephospho-CoA (dPCoA) and pyrophosphate.</text>
</comment>
<comment type="catalytic activity">
    <reaction evidence="1">
        <text>(R)-4'-phosphopantetheine + ATP + H(+) = 3'-dephospho-CoA + diphosphate</text>
        <dbReference type="Rhea" id="RHEA:19801"/>
        <dbReference type="ChEBI" id="CHEBI:15378"/>
        <dbReference type="ChEBI" id="CHEBI:30616"/>
        <dbReference type="ChEBI" id="CHEBI:33019"/>
        <dbReference type="ChEBI" id="CHEBI:57328"/>
        <dbReference type="ChEBI" id="CHEBI:61723"/>
        <dbReference type="EC" id="2.7.7.3"/>
    </reaction>
</comment>
<comment type="cofactor">
    <cofactor evidence="1">
        <name>Mg(2+)</name>
        <dbReference type="ChEBI" id="CHEBI:18420"/>
    </cofactor>
</comment>
<comment type="pathway">
    <text evidence="1">Cofactor biosynthesis; coenzyme A biosynthesis; CoA from (R)-pantothenate: step 4/5.</text>
</comment>
<comment type="subunit">
    <text evidence="1">Homohexamer.</text>
</comment>
<comment type="subcellular location">
    <subcellularLocation>
        <location evidence="1">Cytoplasm</location>
    </subcellularLocation>
</comment>
<comment type="similarity">
    <text evidence="1">Belongs to the bacterial CoaD family.</text>
</comment>
<gene>
    <name evidence="1" type="primary">coaD</name>
    <name type="ordered locus">cce_0878</name>
</gene>
<proteinExistence type="inferred from homology"/>
<accession>B1WS35</accession>
<feature type="chain" id="PRO_1000096786" description="Phosphopantetheine adenylyltransferase">
    <location>
        <begin position="1"/>
        <end position="157"/>
    </location>
</feature>
<feature type="binding site" evidence="1">
    <location>
        <begin position="8"/>
        <end position="9"/>
    </location>
    <ligand>
        <name>ATP</name>
        <dbReference type="ChEBI" id="CHEBI:30616"/>
    </ligand>
</feature>
<feature type="binding site" evidence="1">
    <location>
        <position position="8"/>
    </location>
    <ligand>
        <name>substrate</name>
    </ligand>
</feature>
<feature type="binding site" evidence="1">
    <location>
        <position position="16"/>
    </location>
    <ligand>
        <name>ATP</name>
        <dbReference type="ChEBI" id="CHEBI:30616"/>
    </ligand>
</feature>
<feature type="binding site" evidence="1">
    <location>
        <position position="40"/>
    </location>
    <ligand>
        <name>substrate</name>
    </ligand>
</feature>
<feature type="binding site" evidence="1">
    <location>
        <position position="72"/>
    </location>
    <ligand>
        <name>substrate</name>
    </ligand>
</feature>
<feature type="binding site" evidence="1">
    <location>
        <position position="86"/>
    </location>
    <ligand>
        <name>substrate</name>
    </ligand>
</feature>
<feature type="binding site" evidence="1">
    <location>
        <begin position="87"/>
        <end position="89"/>
    </location>
    <ligand>
        <name>ATP</name>
        <dbReference type="ChEBI" id="CHEBI:30616"/>
    </ligand>
</feature>
<feature type="binding site" evidence="1">
    <location>
        <position position="97"/>
    </location>
    <ligand>
        <name>ATP</name>
        <dbReference type="ChEBI" id="CHEBI:30616"/>
    </ligand>
</feature>
<feature type="binding site" evidence="1">
    <location>
        <begin position="122"/>
        <end position="128"/>
    </location>
    <ligand>
        <name>ATP</name>
        <dbReference type="ChEBI" id="CHEBI:30616"/>
    </ligand>
</feature>
<feature type="site" description="Transition state stabilizer" evidence="1">
    <location>
        <position position="16"/>
    </location>
</feature>
<protein>
    <recommendedName>
        <fullName evidence="1">Phosphopantetheine adenylyltransferase</fullName>
        <ecNumber evidence="1">2.7.7.3</ecNumber>
    </recommendedName>
    <alternativeName>
        <fullName evidence="1">Dephospho-CoA pyrophosphorylase</fullName>
    </alternativeName>
    <alternativeName>
        <fullName evidence="1">Pantetheine-phosphate adenylyltransferase</fullName>
        <shortName evidence="1">PPAT</shortName>
    </alternativeName>
</protein>